<sequence>MHNPRLFLSRAGFFSKPGLLPWDTGRPPDLSQSLLGRAYKGSFTSVIAKKHPSRQKYQKKQRHCRDDSWQERLADVVTPLWRLSYEAQLKVKFEAQKKLLQSLESHLKVLHGVSDTVAAHQSEGLRCLLHPIIPSPTTTGYRNKSTFSVYRSPDGNPKTVGYYLGTWKDGNVVCLPCNHLKNIPEKHSQVAQYYEVFLRQSSVEPCLLFHEGGHWRELVVRTNRQGHTMAIVTFHPQGLSEEEVCVQKVTLKDFFTKGPGAICELTSLYFQESTMTRCSHQQSPYQLLFGEPHIFEDLLGLKIRISPDAFFQINTAGAEMLYRIIGELSGVNSESLLLDICCGTGVIGLSVAQRASQVHGIELVEQAVEDARWTAAFNGVTNCEFHAGRAETILPQLLKSQKDEKLTVAVVNPARAGLHYRVVRAIRNCRTIHTLVFVSCKPHGESTRNFIELCCPPNSAKQLLGDPFVLREAVPVDLFPHTPHCELVLLFTR</sequence>
<name>TRM2B_MOUSE</name>
<gene>
    <name evidence="6 8" type="primary">Trmt2b</name>
</gene>
<reference key="1">
    <citation type="journal article" date="2005" name="Science">
        <title>The transcriptional landscape of the mammalian genome.</title>
        <authorList>
            <person name="Carninci P."/>
            <person name="Kasukawa T."/>
            <person name="Katayama S."/>
            <person name="Gough J."/>
            <person name="Frith M.C."/>
            <person name="Maeda N."/>
            <person name="Oyama R."/>
            <person name="Ravasi T."/>
            <person name="Lenhard B."/>
            <person name="Wells C."/>
            <person name="Kodzius R."/>
            <person name="Shimokawa K."/>
            <person name="Bajic V.B."/>
            <person name="Brenner S.E."/>
            <person name="Batalov S."/>
            <person name="Forrest A.R."/>
            <person name="Zavolan M."/>
            <person name="Davis M.J."/>
            <person name="Wilming L.G."/>
            <person name="Aidinis V."/>
            <person name="Allen J.E."/>
            <person name="Ambesi-Impiombato A."/>
            <person name="Apweiler R."/>
            <person name="Aturaliya R.N."/>
            <person name="Bailey T.L."/>
            <person name="Bansal M."/>
            <person name="Baxter L."/>
            <person name="Beisel K.W."/>
            <person name="Bersano T."/>
            <person name="Bono H."/>
            <person name="Chalk A.M."/>
            <person name="Chiu K.P."/>
            <person name="Choudhary V."/>
            <person name="Christoffels A."/>
            <person name="Clutterbuck D.R."/>
            <person name="Crowe M.L."/>
            <person name="Dalla E."/>
            <person name="Dalrymple B.P."/>
            <person name="de Bono B."/>
            <person name="Della Gatta G."/>
            <person name="di Bernardo D."/>
            <person name="Down T."/>
            <person name="Engstrom P."/>
            <person name="Fagiolini M."/>
            <person name="Faulkner G."/>
            <person name="Fletcher C.F."/>
            <person name="Fukushima T."/>
            <person name="Furuno M."/>
            <person name="Futaki S."/>
            <person name="Gariboldi M."/>
            <person name="Georgii-Hemming P."/>
            <person name="Gingeras T.R."/>
            <person name="Gojobori T."/>
            <person name="Green R.E."/>
            <person name="Gustincich S."/>
            <person name="Harbers M."/>
            <person name="Hayashi Y."/>
            <person name="Hensch T.K."/>
            <person name="Hirokawa N."/>
            <person name="Hill D."/>
            <person name="Huminiecki L."/>
            <person name="Iacono M."/>
            <person name="Ikeo K."/>
            <person name="Iwama A."/>
            <person name="Ishikawa T."/>
            <person name="Jakt M."/>
            <person name="Kanapin A."/>
            <person name="Katoh M."/>
            <person name="Kawasawa Y."/>
            <person name="Kelso J."/>
            <person name="Kitamura H."/>
            <person name="Kitano H."/>
            <person name="Kollias G."/>
            <person name="Krishnan S.P."/>
            <person name="Kruger A."/>
            <person name="Kummerfeld S.K."/>
            <person name="Kurochkin I.V."/>
            <person name="Lareau L.F."/>
            <person name="Lazarevic D."/>
            <person name="Lipovich L."/>
            <person name="Liu J."/>
            <person name="Liuni S."/>
            <person name="McWilliam S."/>
            <person name="Madan Babu M."/>
            <person name="Madera M."/>
            <person name="Marchionni L."/>
            <person name="Matsuda H."/>
            <person name="Matsuzawa S."/>
            <person name="Miki H."/>
            <person name="Mignone F."/>
            <person name="Miyake S."/>
            <person name="Morris K."/>
            <person name="Mottagui-Tabar S."/>
            <person name="Mulder N."/>
            <person name="Nakano N."/>
            <person name="Nakauchi H."/>
            <person name="Ng P."/>
            <person name="Nilsson R."/>
            <person name="Nishiguchi S."/>
            <person name="Nishikawa S."/>
            <person name="Nori F."/>
            <person name="Ohara O."/>
            <person name="Okazaki Y."/>
            <person name="Orlando V."/>
            <person name="Pang K.C."/>
            <person name="Pavan W.J."/>
            <person name="Pavesi G."/>
            <person name="Pesole G."/>
            <person name="Petrovsky N."/>
            <person name="Piazza S."/>
            <person name="Reed J."/>
            <person name="Reid J.F."/>
            <person name="Ring B.Z."/>
            <person name="Ringwald M."/>
            <person name="Rost B."/>
            <person name="Ruan Y."/>
            <person name="Salzberg S.L."/>
            <person name="Sandelin A."/>
            <person name="Schneider C."/>
            <person name="Schoenbach C."/>
            <person name="Sekiguchi K."/>
            <person name="Semple C.A."/>
            <person name="Seno S."/>
            <person name="Sessa L."/>
            <person name="Sheng Y."/>
            <person name="Shibata Y."/>
            <person name="Shimada H."/>
            <person name="Shimada K."/>
            <person name="Silva D."/>
            <person name="Sinclair B."/>
            <person name="Sperling S."/>
            <person name="Stupka E."/>
            <person name="Sugiura K."/>
            <person name="Sultana R."/>
            <person name="Takenaka Y."/>
            <person name="Taki K."/>
            <person name="Tammoja K."/>
            <person name="Tan S.L."/>
            <person name="Tang S."/>
            <person name="Taylor M.S."/>
            <person name="Tegner J."/>
            <person name="Teichmann S.A."/>
            <person name="Ueda H.R."/>
            <person name="van Nimwegen E."/>
            <person name="Verardo R."/>
            <person name="Wei C.L."/>
            <person name="Yagi K."/>
            <person name="Yamanishi H."/>
            <person name="Zabarovsky E."/>
            <person name="Zhu S."/>
            <person name="Zimmer A."/>
            <person name="Hide W."/>
            <person name="Bult C."/>
            <person name="Grimmond S.M."/>
            <person name="Teasdale R.D."/>
            <person name="Liu E.T."/>
            <person name="Brusic V."/>
            <person name="Quackenbush J."/>
            <person name="Wahlestedt C."/>
            <person name="Mattick J.S."/>
            <person name="Hume D.A."/>
            <person name="Kai C."/>
            <person name="Sasaki D."/>
            <person name="Tomaru Y."/>
            <person name="Fukuda S."/>
            <person name="Kanamori-Katayama M."/>
            <person name="Suzuki M."/>
            <person name="Aoki J."/>
            <person name="Arakawa T."/>
            <person name="Iida J."/>
            <person name="Imamura K."/>
            <person name="Itoh M."/>
            <person name="Kato T."/>
            <person name="Kawaji H."/>
            <person name="Kawagashira N."/>
            <person name="Kawashima T."/>
            <person name="Kojima M."/>
            <person name="Kondo S."/>
            <person name="Konno H."/>
            <person name="Nakano K."/>
            <person name="Ninomiya N."/>
            <person name="Nishio T."/>
            <person name="Okada M."/>
            <person name="Plessy C."/>
            <person name="Shibata K."/>
            <person name="Shiraki T."/>
            <person name="Suzuki S."/>
            <person name="Tagami M."/>
            <person name="Waki K."/>
            <person name="Watahiki A."/>
            <person name="Okamura-Oho Y."/>
            <person name="Suzuki H."/>
            <person name="Kawai J."/>
            <person name="Hayashizaki Y."/>
        </authorList>
    </citation>
    <scope>NUCLEOTIDE SEQUENCE [LARGE SCALE MRNA]</scope>
    <source>
        <strain>C57BL/6J</strain>
        <tissue>Skin</tissue>
    </source>
</reference>
<reference key="2">
    <citation type="journal article" date="2009" name="PLoS Biol.">
        <title>Lineage-specific biology revealed by a finished genome assembly of the mouse.</title>
        <authorList>
            <person name="Church D.M."/>
            <person name="Goodstadt L."/>
            <person name="Hillier L.W."/>
            <person name="Zody M.C."/>
            <person name="Goldstein S."/>
            <person name="She X."/>
            <person name="Bult C.J."/>
            <person name="Agarwala R."/>
            <person name="Cherry J.L."/>
            <person name="DiCuccio M."/>
            <person name="Hlavina W."/>
            <person name="Kapustin Y."/>
            <person name="Meric P."/>
            <person name="Maglott D."/>
            <person name="Birtle Z."/>
            <person name="Marques A.C."/>
            <person name="Graves T."/>
            <person name="Zhou S."/>
            <person name="Teague B."/>
            <person name="Potamousis K."/>
            <person name="Churas C."/>
            <person name="Place M."/>
            <person name="Herschleb J."/>
            <person name="Runnheim R."/>
            <person name="Forrest D."/>
            <person name="Amos-Landgraf J."/>
            <person name="Schwartz D.C."/>
            <person name="Cheng Z."/>
            <person name="Lindblad-Toh K."/>
            <person name="Eichler E.E."/>
            <person name="Ponting C.P."/>
        </authorList>
    </citation>
    <scope>NUCLEOTIDE SEQUENCE [LARGE SCALE GENOMIC DNA]</scope>
    <source>
        <strain>C57BL/6J</strain>
    </source>
</reference>
<reference key="3">
    <citation type="journal article" date="2004" name="Genome Res.">
        <title>The status, quality, and expansion of the NIH full-length cDNA project: the Mammalian Gene Collection (MGC).</title>
        <authorList>
            <consortium name="The MGC Project Team"/>
        </authorList>
    </citation>
    <scope>NUCLEOTIDE SEQUENCE [LARGE SCALE MRNA]</scope>
    <source>
        <strain>C57BL/6J</strain>
    </source>
</reference>
<reference key="4">
    <citation type="journal article" date="2020" name="RNA Biol.">
        <title>Mouse Trmt2B protein is a dual specific mitochondrial metyltransferase responsible for m5U formation in both tRNA and rRNA.</title>
        <authorList>
            <person name="Laptev I."/>
            <person name="Shvetsova E."/>
            <person name="Levitskii S."/>
            <person name="Serebryakova M."/>
            <person name="Rubtsova M."/>
            <person name="Bogdanov A."/>
            <person name="Kamenski P."/>
            <person name="Sergiev P."/>
            <person name="Dontsova O."/>
        </authorList>
    </citation>
    <scope>FUNCTION</scope>
    <scope>CATALYTIC ACTIVITY</scope>
</reference>
<accession>Q8BQJ6</accession>
<accession>Q8CE55</accession>
<keyword id="KW-0489">Methyltransferase</keyword>
<keyword id="KW-0496">Mitochondrion</keyword>
<keyword id="KW-1185">Reference proteome</keyword>
<keyword id="KW-0698">rRNA processing</keyword>
<keyword id="KW-0949">S-adenosyl-L-methionine</keyword>
<keyword id="KW-0808">Transferase</keyword>
<keyword id="KW-0809">Transit peptide</keyword>
<keyword id="KW-0819">tRNA processing</keyword>
<dbReference type="EC" id="2.1.1.35" evidence="5"/>
<dbReference type="EC" id="2.1.1.-" evidence="5"/>
<dbReference type="EMBL" id="AK028999">
    <property type="protein sequence ID" value="BAC26233.1"/>
    <property type="molecule type" value="mRNA"/>
</dbReference>
<dbReference type="EMBL" id="AK049523">
    <property type="protein sequence ID" value="BAC33793.1"/>
    <property type="molecule type" value="mRNA"/>
</dbReference>
<dbReference type="EMBL" id="AL672215">
    <property type="status" value="NOT_ANNOTATED_CDS"/>
    <property type="molecule type" value="Genomic_DNA"/>
</dbReference>
<dbReference type="EMBL" id="BC056937">
    <property type="protein sequence ID" value="AAH56937.1"/>
    <property type="molecule type" value="mRNA"/>
</dbReference>
<dbReference type="CCDS" id="CCDS41121.1"/>
<dbReference type="RefSeq" id="NP_001161466.1">
    <property type="nucleotide sequence ID" value="NM_001167994.1"/>
</dbReference>
<dbReference type="RefSeq" id="NP_766128.2">
    <property type="nucleotide sequence ID" value="NM_172540.2"/>
</dbReference>
<dbReference type="SMR" id="Q8BQJ6"/>
<dbReference type="FunCoup" id="Q8BQJ6">
    <property type="interactions" value="576"/>
</dbReference>
<dbReference type="STRING" id="10090.ENSMUSP00000108878"/>
<dbReference type="iPTMnet" id="Q8BQJ6"/>
<dbReference type="PhosphoSitePlus" id="Q8BQJ6"/>
<dbReference type="PaxDb" id="10090-ENSMUSP00000084820"/>
<dbReference type="ProteomicsDB" id="258849"/>
<dbReference type="Antibodypedia" id="28575">
    <property type="antibodies" value="157 antibodies from 24 providers"/>
</dbReference>
<dbReference type="DNASU" id="215201"/>
<dbReference type="Ensembl" id="ENSMUST00000087541.12">
    <property type="protein sequence ID" value="ENSMUSP00000084820.6"/>
    <property type="gene ID" value="ENSMUSG00000067369.13"/>
</dbReference>
<dbReference type="Ensembl" id="ENSMUST00000113252.8">
    <property type="protein sequence ID" value="ENSMUSP00000108878.2"/>
    <property type="gene ID" value="ENSMUSG00000067369.13"/>
</dbReference>
<dbReference type="GeneID" id="215201"/>
<dbReference type="KEGG" id="mmu:215201"/>
<dbReference type="UCSC" id="uc009ufq.2">
    <property type="organism name" value="mouse"/>
</dbReference>
<dbReference type="AGR" id="MGI:2442530"/>
<dbReference type="CTD" id="79979"/>
<dbReference type="MGI" id="MGI:2442530">
    <property type="gene designation" value="Trmt2b"/>
</dbReference>
<dbReference type="VEuPathDB" id="HostDB:ENSMUSG00000067369"/>
<dbReference type="eggNOG" id="KOG2187">
    <property type="taxonomic scope" value="Eukaryota"/>
</dbReference>
<dbReference type="GeneTree" id="ENSGT00530000063723"/>
<dbReference type="HOGENOM" id="CLU_014689_4_0_1"/>
<dbReference type="InParanoid" id="Q8BQJ6"/>
<dbReference type="OMA" id="HGQPHIY"/>
<dbReference type="OrthoDB" id="10250660at2759"/>
<dbReference type="PhylomeDB" id="Q8BQJ6"/>
<dbReference type="TreeFam" id="TF352239"/>
<dbReference type="BioGRID-ORCS" id="215201">
    <property type="hits" value="0 hits in 76 CRISPR screens"/>
</dbReference>
<dbReference type="ChiTaRS" id="Trmt2b">
    <property type="organism name" value="mouse"/>
</dbReference>
<dbReference type="PRO" id="PR:Q8BQJ6"/>
<dbReference type="Proteomes" id="UP000000589">
    <property type="component" value="Chromosome X"/>
</dbReference>
<dbReference type="RNAct" id="Q8BQJ6">
    <property type="molecule type" value="protein"/>
</dbReference>
<dbReference type="Bgee" id="ENSMUSG00000067369">
    <property type="expression patterns" value="Expressed in myocardium of ventricle and 216 other cell types or tissues"/>
</dbReference>
<dbReference type="ExpressionAtlas" id="Q8BQJ6">
    <property type="expression patterns" value="baseline and differential"/>
</dbReference>
<dbReference type="GO" id="GO:0005759">
    <property type="term" value="C:mitochondrial matrix"/>
    <property type="evidence" value="ECO:0000250"/>
    <property type="project" value="UniProtKB"/>
</dbReference>
<dbReference type="GO" id="GO:0005739">
    <property type="term" value="C:mitochondrion"/>
    <property type="evidence" value="ECO:0007005"/>
    <property type="project" value="MGI"/>
</dbReference>
<dbReference type="GO" id="GO:0070041">
    <property type="term" value="F:rRNA (uridine-C5-)-methyltransferase activity"/>
    <property type="evidence" value="ECO:0000314"/>
    <property type="project" value="UniProtKB"/>
</dbReference>
<dbReference type="GO" id="GO:0030697">
    <property type="term" value="F:tRNA (uracil(54)-C5)-methyltransferase activity, S-adenosyl methionine-dependent"/>
    <property type="evidence" value="ECO:0000314"/>
    <property type="project" value="UniProtKB"/>
</dbReference>
<dbReference type="GO" id="GO:0008033">
    <property type="term" value="P:tRNA processing"/>
    <property type="evidence" value="ECO:0007669"/>
    <property type="project" value="UniProtKB-KW"/>
</dbReference>
<dbReference type="CDD" id="cd02440">
    <property type="entry name" value="AdoMet_MTases"/>
    <property type="match status" value="1"/>
</dbReference>
<dbReference type="Gene3D" id="2.40.50.1070">
    <property type="match status" value="1"/>
</dbReference>
<dbReference type="Gene3D" id="3.40.50.150">
    <property type="entry name" value="Vaccinia Virus protein VP39"/>
    <property type="match status" value="1"/>
</dbReference>
<dbReference type="InterPro" id="IPR025714">
    <property type="entry name" value="Methyltranfer_dom"/>
</dbReference>
<dbReference type="InterPro" id="IPR029063">
    <property type="entry name" value="SAM-dependent_MTases_sf"/>
</dbReference>
<dbReference type="InterPro" id="IPR045850">
    <property type="entry name" value="TRM2_met"/>
</dbReference>
<dbReference type="InterPro" id="IPR025823">
    <property type="entry name" value="TRM2B_chor"/>
</dbReference>
<dbReference type="InterPro" id="IPR010280">
    <property type="entry name" value="U5_MeTrfase_fam"/>
</dbReference>
<dbReference type="PANTHER" id="PTHR45904">
    <property type="entry name" value="TRNA (URACIL-5-)-METHYLTRANSFERASE"/>
    <property type="match status" value="1"/>
</dbReference>
<dbReference type="PANTHER" id="PTHR45904:SF1">
    <property type="entry name" value="TRNA (URACIL-5-)-METHYLTRANSFERASE HOMOLOG B"/>
    <property type="match status" value="1"/>
</dbReference>
<dbReference type="Pfam" id="PF13847">
    <property type="entry name" value="Methyltransf_31"/>
    <property type="match status" value="1"/>
</dbReference>
<dbReference type="SUPFAM" id="SSF53335">
    <property type="entry name" value="S-adenosyl-L-methionine-dependent methyltransferases"/>
    <property type="match status" value="1"/>
</dbReference>
<dbReference type="PROSITE" id="PS51687">
    <property type="entry name" value="SAM_MT_RNA_M5U"/>
    <property type="match status" value="1"/>
</dbReference>
<dbReference type="PROSITE" id="PS51621">
    <property type="entry name" value="SAM_MT_RNA_M5U_1"/>
    <property type="match status" value="1"/>
</dbReference>
<feature type="transit peptide" description="Mitochondrion" evidence="3">
    <location>
        <begin position="1"/>
        <end position="14"/>
    </location>
</feature>
<feature type="chain" id="PRO_0000311933" description="tRNA (uracil-5-)-methyltransferase homolog B">
    <location>
        <begin position="15"/>
        <end position="493"/>
    </location>
</feature>
<feature type="active site" description="Nucleophile" evidence="4">
    <location>
        <position position="440"/>
    </location>
</feature>
<feature type="active site" description="Proton acceptor" evidence="1">
    <location>
        <position position="486"/>
    </location>
</feature>
<feature type="binding site" evidence="4">
    <location>
        <position position="312"/>
    </location>
    <ligand>
        <name>S-adenosyl-L-methionine</name>
        <dbReference type="ChEBI" id="CHEBI:59789"/>
    </ligand>
</feature>
<feature type="binding site" evidence="4">
    <location>
        <position position="362"/>
    </location>
    <ligand>
        <name>S-adenosyl-L-methionine</name>
        <dbReference type="ChEBI" id="CHEBI:59789"/>
    </ligand>
</feature>
<feature type="binding site" evidence="4">
    <location>
        <position position="412"/>
    </location>
    <ligand>
        <name>S-adenosyl-L-methionine</name>
        <dbReference type="ChEBI" id="CHEBI:59789"/>
    </ligand>
</feature>
<feature type="sequence conflict" description="In Ref. 1; BAC26233." evidence="7" ref="1">
    <original>R</original>
    <variation>K</variation>
    <location>
        <position position="151"/>
    </location>
</feature>
<proteinExistence type="evidence at protein level"/>
<protein>
    <recommendedName>
        <fullName>tRNA (uracil-5-)-methyltransferase homolog B</fullName>
        <ecNumber evidence="5">2.1.1.35</ecNumber>
    </recommendedName>
    <alternativeName>
        <fullName evidence="7">TRM2 homolog B</fullName>
    </alternativeName>
    <alternativeName>
        <fullName evidence="7">rRNA (uracil-5-)-methyltransferase TRMT2B</fullName>
        <ecNumber evidence="5">2.1.1.-</ecNumber>
    </alternativeName>
</protein>
<comment type="function">
    <text evidence="2 5">Mitochondrial S-adenosyl-L-methionine-dependent methyltransferase that catalyzes the formation of 5-methyl-uridine in tRNAs and 12S rRNA (PubMed:31736397). Catalyzes the methylation of uridine at position 54 (m5U54) in all tRNAs (PubMed:31736397). Specifically methylates the uridine in position 425 of 12S rRNA (m5U425) (PubMed:31736397). Does not affect RNA stability or mitochondrial translation (By similarity).</text>
</comment>
<comment type="catalytic activity">
    <reaction evidence="5">
        <text>uridine(54) in tRNA + S-adenosyl-L-methionine = 5-methyluridine(54) in tRNA + S-adenosyl-L-homocysteine + H(+)</text>
        <dbReference type="Rhea" id="RHEA:42712"/>
        <dbReference type="Rhea" id="RHEA-COMP:10167"/>
        <dbReference type="Rhea" id="RHEA-COMP:10193"/>
        <dbReference type="ChEBI" id="CHEBI:15378"/>
        <dbReference type="ChEBI" id="CHEBI:57856"/>
        <dbReference type="ChEBI" id="CHEBI:59789"/>
        <dbReference type="ChEBI" id="CHEBI:65315"/>
        <dbReference type="ChEBI" id="CHEBI:74447"/>
        <dbReference type="EC" id="2.1.1.35"/>
    </reaction>
    <physiologicalReaction direction="left-to-right" evidence="5">
        <dbReference type="Rhea" id="RHEA:42713"/>
    </physiologicalReaction>
</comment>
<comment type="catalytic activity">
    <reaction evidence="5">
        <text>a uridine in 12S rRNA + S-adenosyl-L-methionine = a 5-methyluridine in 12S rRNA + S-adenosyl-L-homocysteine + H(+)</text>
        <dbReference type="Rhea" id="RHEA:69859"/>
        <dbReference type="Rhea" id="RHEA-COMP:17791"/>
        <dbReference type="Rhea" id="RHEA-COMP:17792"/>
        <dbReference type="ChEBI" id="CHEBI:15378"/>
        <dbReference type="ChEBI" id="CHEBI:57856"/>
        <dbReference type="ChEBI" id="CHEBI:59789"/>
        <dbReference type="ChEBI" id="CHEBI:65315"/>
        <dbReference type="ChEBI" id="CHEBI:74447"/>
    </reaction>
    <physiologicalReaction direction="left-to-right" evidence="5">
        <dbReference type="Rhea" id="RHEA:69860"/>
    </physiologicalReaction>
</comment>
<comment type="subcellular location">
    <subcellularLocation>
        <location evidence="2">Mitochondrion matrix</location>
    </subcellularLocation>
</comment>
<comment type="similarity">
    <text evidence="4">Belongs to the class I-like SAM-binding methyltransferase superfamily. RNA M5U methyltransferase family.</text>
</comment>
<organism>
    <name type="scientific">Mus musculus</name>
    <name type="common">Mouse</name>
    <dbReference type="NCBI Taxonomy" id="10090"/>
    <lineage>
        <taxon>Eukaryota</taxon>
        <taxon>Metazoa</taxon>
        <taxon>Chordata</taxon>
        <taxon>Craniata</taxon>
        <taxon>Vertebrata</taxon>
        <taxon>Euteleostomi</taxon>
        <taxon>Mammalia</taxon>
        <taxon>Eutheria</taxon>
        <taxon>Euarchontoglires</taxon>
        <taxon>Glires</taxon>
        <taxon>Rodentia</taxon>
        <taxon>Myomorpha</taxon>
        <taxon>Muroidea</taxon>
        <taxon>Muridae</taxon>
        <taxon>Murinae</taxon>
        <taxon>Mus</taxon>
        <taxon>Mus</taxon>
    </lineage>
</organism>
<evidence type="ECO:0000250" key="1">
    <source>
        <dbReference type="UniProtKB" id="P23003"/>
    </source>
</evidence>
<evidence type="ECO:0000250" key="2">
    <source>
        <dbReference type="UniProtKB" id="Q96GJ1"/>
    </source>
</evidence>
<evidence type="ECO:0000255" key="3"/>
<evidence type="ECO:0000255" key="4">
    <source>
        <dbReference type="PROSITE-ProRule" id="PRU01024"/>
    </source>
</evidence>
<evidence type="ECO:0000269" key="5">
    <source>
    </source>
</evidence>
<evidence type="ECO:0000303" key="6">
    <source>
    </source>
</evidence>
<evidence type="ECO:0000305" key="7"/>
<evidence type="ECO:0000312" key="8">
    <source>
        <dbReference type="MGI" id="MGI:2442530"/>
    </source>
</evidence>